<protein>
    <recommendedName>
        <fullName evidence="1">Bis(5'-nucleosyl)-tetraphosphatase, symmetrical</fullName>
        <ecNumber evidence="1">3.6.1.41</ecNumber>
    </recommendedName>
    <alternativeName>
        <fullName evidence="1">Ap4A hydrolase</fullName>
    </alternativeName>
    <alternativeName>
        <fullName evidence="1">Diadenosine 5',5'''-P1,P4-tetraphosphate pyrophosphohydrolase</fullName>
    </alternativeName>
    <alternativeName>
        <fullName evidence="1">Diadenosine tetraphosphatase</fullName>
    </alternativeName>
</protein>
<name>APAH_BURM7</name>
<sequence length="282" mass="30572">MTNFSSSPPIAFGDLQGCHAAYRQLFDTLAPAADTPLWFAGDLVNRGPASLATLREIAALGERAIAVLGNHDLHLLAVAAGIRTLKPGDTIGEILDAPDADDLIEWVRHRPFAHFERGMLMVHAGLLPQWDAALALELADELQRALRASNWRDTLRSLYGNDPNCWSPDLKHADRLRVAFNAFTRIRFCTPEGAMEFRANGGPAAAPAGYLPWFDAPGRKTADVTVVFGHWAALGLMLRENLVALDSGCVWGNRLSAVRLADDPAARVVTQVACERCGAADE</sequence>
<gene>
    <name evidence="1" type="primary">apaH</name>
    <name type="ordered locus">BMA10247_1853</name>
</gene>
<dbReference type="EC" id="3.6.1.41" evidence="1"/>
<dbReference type="EMBL" id="CP000548">
    <property type="protein sequence ID" value="ABO06890.1"/>
    <property type="molecule type" value="Genomic_DNA"/>
</dbReference>
<dbReference type="RefSeq" id="WP_004186146.1">
    <property type="nucleotide sequence ID" value="NZ_CP007802.1"/>
</dbReference>
<dbReference type="SMR" id="A3MMA4"/>
<dbReference type="KEGG" id="bmaz:BM44_1349"/>
<dbReference type="KEGG" id="bmn:BMA10247_1853"/>
<dbReference type="PATRIC" id="fig|320389.8.peg.1510"/>
<dbReference type="GO" id="GO:0008803">
    <property type="term" value="F:bis(5'-nucleosyl)-tetraphosphatase (symmetrical) activity"/>
    <property type="evidence" value="ECO:0007669"/>
    <property type="project" value="UniProtKB-UniRule"/>
</dbReference>
<dbReference type="CDD" id="cd07422">
    <property type="entry name" value="MPP_ApaH"/>
    <property type="match status" value="1"/>
</dbReference>
<dbReference type="Gene3D" id="3.60.21.10">
    <property type="match status" value="1"/>
</dbReference>
<dbReference type="HAMAP" id="MF_00199">
    <property type="entry name" value="ApaH"/>
    <property type="match status" value="1"/>
</dbReference>
<dbReference type="InterPro" id="IPR004617">
    <property type="entry name" value="ApaH"/>
</dbReference>
<dbReference type="InterPro" id="IPR004843">
    <property type="entry name" value="Calcineurin-like_PHP_ApaH"/>
</dbReference>
<dbReference type="InterPro" id="IPR029052">
    <property type="entry name" value="Metallo-depent_PP-like"/>
</dbReference>
<dbReference type="NCBIfam" id="TIGR00668">
    <property type="entry name" value="apaH"/>
    <property type="match status" value="1"/>
</dbReference>
<dbReference type="NCBIfam" id="NF001204">
    <property type="entry name" value="PRK00166.1"/>
    <property type="match status" value="1"/>
</dbReference>
<dbReference type="PANTHER" id="PTHR40942">
    <property type="match status" value="1"/>
</dbReference>
<dbReference type="PANTHER" id="PTHR40942:SF4">
    <property type="entry name" value="CYTOCHROME C5"/>
    <property type="match status" value="1"/>
</dbReference>
<dbReference type="Pfam" id="PF00149">
    <property type="entry name" value="Metallophos"/>
    <property type="match status" value="1"/>
</dbReference>
<dbReference type="PIRSF" id="PIRSF000903">
    <property type="entry name" value="B5n-ttraPtase_sm"/>
    <property type="match status" value="1"/>
</dbReference>
<dbReference type="SUPFAM" id="SSF56300">
    <property type="entry name" value="Metallo-dependent phosphatases"/>
    <property type="match status" value="1"/>
</dbReference>
<accession>A3MMA4</accession>
<reference key="1">
    <citation type="journal article" date="2010" name="Genome Biol. Evol.">
        <title>Continuing evolution of Burkholderia mallei through genome reduction and large-scale rearrangements.</title>
        <authorList>
            <person name="Losada L."/>
            <person name="Ronning C.M."/>
            <person name="DeShazer D."/>
            <person name="Woods D."/>
            <person name="Fedorova N."/>
            <person name="Kim H.S."/>
            <person name="Shabalina S.A."/>
            <person name="Pearson T.R."/>
            <person name="Brinkac L."/>
            <person name="Tan P."/>
            <person name="Nandi T."/>
            <person name="Crabtree J."/>
            <person name="Badger J."/>
            <person name="Beckstrom-Sternberg S."/>
            <person name="Saqib M."/>
            <person name="Schutzer S.E."/>
            <person name="Keim P."/>
            <person name="Nierman W.C."/>
        </authorList>
    </citation>
    <scope>NUCLEOTIDE SEQUENCE [LARGE SCALE GENOMIC DNA]</scope>
    <source>
        <strain>NCTC 10247</strain>
    </source>
</reference>
<organism>
    <name type="scientific">Burkholderia mallei (strain NCTC 10247)</name>
    <dbReference type="NCBI Taxonomy" id="320389"/>
    <lineage>
        <taxon>Bacteria</taxon>
        <taxon>Pseudomonadati</taxon>
        <taxon>Pseudomonadota</taxon>
        <taxon>Betaproteobacteria</taxon>
        <taxon>Burkholderiales</taxon>
        <taxon>Burkholderiaceae</taxon>
        <taxon>Burkholderia</taxon>
        <taxon>pseudomallei group</taxon>
    </lineage>
</organism>
<proteinExistence type="inferred from homology"/>
<evidence type="ECO:0000255" key="1">
    <source>
        <dbReference type="HAMAP-Rule" id="MF_00199"/>
    </source>
</evidence>
<comment type="function">
    <text evidence="1">Hydrolyzes diadenosine 5',5'''-P1,P4-tetraphosphate to yield ADP.</text>
</comment>
<comment type="catalytic activity">
    <reaction evidence="1">
        <text>P(1),P(4)-bis(5'-adenosyl) tetraphosphate + H2O = 2 ADP + 2 H(+)</text>
        <dbReference type="Rhea" id="RHEA:24252"/>
        <dbReference type="ChEBI" id="CHEBI:15377"/>
        <dbReference type="ChEBI" id="CHEBI:15378"/>
        <dbReference type="ChEBI" id="CHEBI:58141"/>
        <dbReference type="ChEBI" id="CHEBI:456216"/>
        <dbReference type="EC" id="3.6.1.41"/>
    </reaction>
</comment>
<comment type="similarity">
    <text evidence="1">Belongs to the Ap4A hydrolase family.</text>
</comment>
<feature type="chain" id="PRO_1000012046" description="Bis(5'-nucleosyl)-tetraphosphatase, symmetrical">
    <location>
        <begin position="1"/>
        <end position="282"/>
    </location>
</feature>
<keyword id="KW-0378">Hydrolase</keyword>